<name>SYY_MACCJ</name>
<sequence>MTSALLEDLRWRGLIYQETHPEEMEALLNKESVSVYCGTDPTADSLHIGHLLPFMTLKRFQAHGHRPVVLIGGATGMIGDPSGRTDERTLQTLAQVQHNVDGISKQMEQLFDFGTENGAIRVDNKDWLGKIDLLTFLRDYGKHVGVNYLLNKDSIASRLETGISFTEFTYTILQAIDFGHLNKTLNVKLQIGGSDQWGNITSGMELMRRMYGEVEAYGMTVPLVVKSDGKKFGKSEGGAVWLDRTKTTPYEFYQFWINTPDSDVIKFLKYFTFLSKEEIDALETSVENEPHLRLAQKRLAEEVTKYVHDESALEEAVNITDALFKGDLKALTADQLRTSFKDVPQAKVTTTNLVELLIEAGISPSKRQAREDITNGAISINGEKVQDVAYEIVATDKIEDEFTIIRRGKKKYFMIIH</sequence>
<feature type="chain" id="PRO_1000189308" description="Tyrosine--tRNA ligase">
    <location>
        <begin position="1"/>
        <end position="417"/>
    </location>
</feature>
<feature type="domain" description="S4 RNA-binding" evidence="1">
    <location>
        <begin position="351"/>
        <end position="417"/>
    </location>
</feature>
<feature type="short sequence motif" description="'HIGH' region">
    <location>
        <begin position="41"/>
        <end position="50"/>
    </location>
</feature>
<feature type="short sequence motif" description="'KMSKS' region">
    <location>
        <begin position="231"/>
        <end position="235"/>
    </location>
</feature>
<feature type="binding site" evidence="1">
    <location>
        <position position="36"/>
    </location>
    <ligand>
        <name>L-tyrosine</name>
        <dbReference type="ChEBI" id="CHEBI:58315"/>
    </ligand>
</feature>
<feature type="binding site" evidence="1">
    <location>
        <position position="170"/>
    </location>
    <ligand>
        <name>L-tyrosine</name>
        <dbReference type="ChEBI" id="CHEBI:58315"/>
    </ligand>
</feature>
<feature type="binding site" evidence="1">
    <location>
        <position position="174"/>
    </location>
    <ligand>
        <name>L-tyrosine</name>
        <dbReference type="ChEBI" id="CHEBI:58315"/>
    </ligand>
</feature>
<feature type="binding site" evidence="1">
    <location>
        <position position="234"/>
    </location>
    <ligand>
        <name>ATP</name>
        <dbReference type="ChEBI" id="CHEBI:30616"/>
    </ligand>
</feature>
<dbReference type="EC" id="6.1.1.1" evidence="1"/>
<dbReference type="EMBL" id="AP009484">
    <property type="protein sequence ID" value="BAH18113.1"/>
    <property type="molecule type" value="Genomic_DNA"/>
</dbReference>
<dbReference type="RefSeq" id="WP_012657311.1">
    <property type="nucleotide sequence ID" value="NC_011999.1"/>
</dbReference>
<dbReference type="SMR" id="B9E7E5"/>
<dbReference type="STRING" id="458233.MCCL_1406"/>
<dbReference type="KEGG" id="mcl:MCCL_1406"/>
<dbReference type="eggNOG" id="COG0162">
    <property type="taxonomic scope" value="Bacteria"/>
</dbReference>
<dbReference type="HOGENOM" id="CLU_024003_0_3_9"/>
<dbReference type="OrthoDB" id="9804243at2"/>
<dbReference type="Proteomes" id="UP000001383">
    <property type="component" value="Chromosome"/>
</dbReference>
<dbReference type="GO" id="GO:0005829">
    <property type="term" value="C:cytosol"/>
    <property type="evidence" value="ECO:0007669"/>
    <property type="project" value="TreeGrafter"/>
</dbReference>
<dbReference type="GO" id="GO:0005524">
    <property type="term" value="F:ATP binding"/>
    <property type="evidence" value="ECO:0007669"/>
    <property type="project" value="UniProtKB-UniRule"/>
</dbReference>
<dbReference type="GO" id="GO:0003723">
    <property type="term" value="F:RNA binding"/>
    <property type="evidence" value="ECO:0007669"/>
    <property type="project" value="UniProtKB-KW"/>
</dbReference>
<dbReference type="GO" id="GO:0004831">
    <property type="term" value="F:tyrosine-tRNA ligase activity"/>
    <property type="evidence" value="ECO:0007669"/>
    <property type="project" value="UniProtKB-UniRule"/>
</dbReference>
<dbReference type="GO" id="GO:0006437">
    <property type="term" value="P:tyrosyl-tRNA aminoacylation"/>
    <property type="evidence" value="ECO:0007669"/>
    <property type="project" value="UniProtKB-UniRule"/>
</dbReference>
<dbReference type="CDD" id="cd00165">
    <property type="entry name" value="S4"/>
    <property type="match status" value="1"/>
</dbReference>
<dbReference type="CDD" id="cd00395">
    <property type="entry name" value="Tyr_Trp_RS_core"/>
    <property type="match status" value="1"/>
</dbReference>
<dbReference type="FunFam" id="1.10.240.10:FF:000001">
    <property type="entry name" value="Tyrosine--tRNA ligase"/>
    <property type="match status" value="1"/>
</dbReference>
<dbReference type="FunFam" id="3.40.50.620:FF:000008">
    <property type="entry name" value="Tyrosine--tRNA ligase"/>
    <property type="match status" value="1"/>
</dbReference>
<dbReference type="Gene3D" id="3.40.50.620">
    <property type="entry name" value="HUPs"/>
    <property type="match status" value="1"/>
</dbReference>
<dbReference type="Gene3D" id="3.10.290.10">
    <property type="entry name" value="RNA-binding S4 domain"/>
    <property type="match status" value="1"/>
</dbReference>
<dbReference type="Gene3D" id="1.10.240.10">
    <property type="entry name" value="Tyrosyl-Transfer RNA Synthetase"/>
    <property type="match status" value="1"/>
</dbReference>
<dbReference type="HAMAP" id="MF_02006">
    <property type="entry name" value="Tyr_tRNA_synth_type1"/>
    <property type="match status" value="1"/>
</dbReference>
<dbReference type="InterPro" id="IPR001412">
    <property type="entry name" value="aa-tRNA-synth_I_CS"/>
</dbReference>
<dbReference type="InterPro" id="IPR002305">
    <property type="entry name" value="aa-tRNA-synth_Ic"/>
</dbReference>
<dbReference type="InterPro" id="IPR014729">
    <property type="entry name" value="Rossmann-like_a/b/a_fold"/>
</dbReference>
<dbReference type="InterPro" id="IPR002942">
    <property type="entry name" value="S4_RNA-bd"/>
</dbReference>
<dbReference type="InterPro" id="IPR036986">
    <property type="entry name" value="S4_RNA-bd_sf"/>
</dbReference>
<dbReference type="InterPro" id="IPR054608">
    <property type="entry name" value="SYY-like_C"/>
</dbReference>
<dbReference type="InterPro" id="IPR002307">
    <property type="entry name" value="Tyr-tRNA-ligase"/>
</dbReference>
<dbReference type="InterPro" id="IPR024088">
    <property type="entry name" value="Tyr-tRNA-ligase_bac-type"/>
</dbReference>
<dbReference type="InterPro" id="IPR024107">
    <property type="entry name" value="Tyr-tRNA-ligase_bac_1"/>
</dbReference>
<dbReference type="NCBIfam" id="TIGR00234">
    <property type="entry name" value="tyrS"/>
    <property type="match status" value="1"/>
</dbReference>
<dbReference type="PANTHER" id="PTHR11766:SF0">
    <property type="entry name" value="TYROSINE--TRNA LIGASE, MITOCHONDRIAL"/>
    <property type="match status" value="1"/>
</dbReference>
<dbReference type="PANTHER" id="PTHR11766">
    <property type="entry name" value="TYROSYL-TRNA SYNTHETASE"/>
    <property type="match status" value="1"/>
</dbReference>
<dbReference type="Pfam" id="PF22421">
    <property type="entry name" value="SYY_C-terminal"/>
    <property type="match status" value="1"/>
</dbReference>
<dbReference type="Pfam" id="PF00579">
    <property type="entry name" value="tRNA-synt_1b"/>
    <property type="match status" value="1"/>
</dbReference>
<dbReference type="PRINTS" id="PR01040">
    <property type="entry name" value="TRNASYNTHTYR"/>
</dbReference>
<dbReference type="SMART" id="SM00363">
    <property type="entry name" value="S4"/>
    <property type="match status" value="1"/>
</dbReference>
<dbReference type="SUPFAM" id="SSF55174">
    <property type="entry name" value="Alpha-L RNA-binding motif"/>
    <property type="match status" value="1"/>
</dbReference>
<dbReference type="SUPFAM" id="SSF52374">
    <property type="entry name" value="Nucleotidylyl transferase"/>
    <property type="match status" value="1"/>
</dbReference>
<dbReference type="PROSITE" id="PS00178">
    <property type="entry name" value="AA_TRNA_LIGASE_I"/>
    <property type="match status" value="1"/>
</dbReference>
<dbReference type="PROSITE" id="PS50889">
    <property type="entry name" value="S4"/>
    <property type="match status" value="1"/>
</dbReference>
<evidence type="ECO:0000255" key="1">
    <source>
        <dbReference type="HAMAP-Rule" id="MF_02006"/>
    </source>
</evidence>
<organism>
    <name type="scientific">Macrococcus caseolyticus (strain JCSC5402)</name>
    <name type="common">Macrococcoides caseolyticum</name>
    <dbReference type="NCBI Taxonomy" id="458233"/>
    <lineage>
        <taxon>Bacteria</taxon>
        <taxon>Bacillati</taxon>
        <taxon>Bacillota</taxon>
        <taxon>Bacilli</taxon>
        <taxon>Bacillales</taxon>
        <taxon>Staphylococcaceae</taxon>
        <taxon>Macrococcoides</taxon>
    </lineage>
</organism>
<accession>B9E7E5</accession>
<reference key="1">
    <citation type="journal article" date="2009" name="J. Bacteriol.">
        <title>Complete genome sequence of Macrococcus caseolyticus strain JCSCS5402, reflecting the ancestral genome of the human-pathogenic staphylococci.</title>
        <authorList>
            <person name="Baba T."/>
            <person name="Kuwahara-Arai K."/>
            <person name="Uchiyama I."/>
            <person name="Takeuchi F."/>
            <person name="Ito T."/>
            <person name="Hiramatsu K."/>
        </authorList>
    </citation>
    <scope>NUCLEOTIDE SEQUENCE [LARGE SCALE GENOMIC DNA]</scope>
    <source>
        <strain>JCSC5402</strain>
    </source>
</reference>
<gene>
    <name evidence="1" type="primary">tyrS</name>
    <name type="ordered locus">MCCL_1406</name>
</gene>
<keyword id="KW-0030">Aminoacyl-tRNA synthetase</keyword>
<keyword id="KW-0067">ATP-binding</keyword>
<keyword id="KW-0963">Cytoplasm</keyword>
<keyword id="KW-0436">Ligase</keyword>
<keyword id="KW-0547">Nucleotide-binding</keyword>
<keyword id="KW-0648">Protein biosynthesis</keyword>
<keyword id="KW-1185">Reference proteome</keyword>
<keyword id="KW-0694">RNA-binding</keyword>
<protein>
    <recommendedName>
        <fullName evidence="1">Tyrosine--tRNA ligase</fullName>
        <ecNumber evidence="1">6.1.1.1</ecNumber>
    </recommendedName>
    <alternativeName>
        <fullName evidence="1">Tyrosyl-tRNA synthetase</fullName>
        <shortName evidence="1">TyrRS</shortName>
    </alternativeName>
</protein>
<comment type="function">
    <text evidence="1">Catalyzes the attachment of tyrosine to tRNA(Tyr) in a two-step reaction: tyrosine is first activated by ATP to form Tyr-AMP and then transferred to the acceptor end of tRNA(Tyr).</text>
</comment>
<comment type="catalytic activity">
    <reaction evidence="1">
        <text>tRNA(Tyr) + L-tyrosine + ATP = L-tyrosyl-tRNA(Tyr) + AMP + diphosphate + H(+)</text>
        <dbReference type="Rhea" id="RHEA:10220"/>
        <dbReference type="Rhea" id="RHEA-COMP:9706"/>
        <dbReference type="Rhea" id="RHEA-COMP:9707"/>
        <dbReference type="ChEBI" id="CHEBI:15378"/>
        <dbReference type="ChEBI" id="CHEBI:30616"/>
        <dbReference type="ChEBI" id="CHEBI:33019"/>
        <dbReference type="ChEBI" id="CHEBI:58315"/>
        <dbReference type="ChEBI" id="CHEBI:78442"/>
        <dbReference type="ChEBI" id="CHEBI:78536"/>
        <dbReference type="ChEBI" id="CHEBI:456215"/>
        <dbReference type="EC" id="6.1.1.1"/>
    </reaction>
</comment>
<comment type="subunit">
    <text evidence="1">Homodimer.</text>
</comment>
<comment type="subcellular location">
    <subcellularLocation>
        <location evidence="1">Cytoplasm</location>
    </subcellularLocation>
</comment>
<comment type="similarity">
    <text evidence="1">Belongs to the class-I aminoacyl-tRNA synthetase family. TyrS type 1 subfamily.</text>
</comment>
<proteinExistence type="inferred from homology"/>